<proteinExistence type="inferred from homology"/>
<protein>
    <recommendedName>
        <fullName>ATP-dependent DNA helicase RecG</fullName>
        <ecNumber evidence="1">5.6.2.4</ecNumber>
    </recommendedName>
    <alternativeName>
        <fullName>DNA branch migration protein RecG</fullName>
    </alternativeName>
    <alternativeName>
        <fullName>Probable DNA 3'-5' helicase RecG</fullName>
    </alternativeName>
</protein>
<comment type="function">
    <text evidence="1">Plays a critical role in recombination and DNA repair. Helps process Holliday junction intermediates to mature products by catalyzing branch migration. Has replication fork regression activity, unwinds stalled or blocked replication forks to make a HJ that can be resolved. Has a DNA unwinding activity characteristic of a DNA helicase with 3'-5' polarity (By similarity).</text>
</comment>
<comment type="catalytic activity">
    <reaction evidence="1">
        <text>Couples ATP hydrolysis with the unwinding of duplex DNA by translocating in the 3'-5' direction.</text>
        <dbReference type="EC" id="5.6.2.4"/>
    </reaction>
</comment>
<comment type="catalytic activity">
    <reaction evidence="1">
        <text>ATP + H2O = ADP + phosphate + H(+)</text>
        <dbReference type="Rhea" id="RHEA:13065"/>
        <dbReference type="ChEBI" id="CHEBI:15377"/>
        <dbReference type="ChEBI" id="CHEBI:15378"/>
        <dbReference type="ChEBI" id="CHEBI:30616"/>
        <dbReference type="ChEBI" id="CHEBI:43474"/>
        <dbReference type="ChEBI" id="CHEBI:456216"/>
        <dbReference type="EC" id="5.6.2.4"/>
    </reaction>
</comment>
<comment type="subunit">
    <text evidence="2">Monomer (By similarity).</text>
</comment>
<comment type="domain">
    <text evidence="2">The wedge domain within the N-terminus inserts into the replication fork junction, where the lagging and leading strand split (By similarity).</text>
</comment>
<comment type="similarity">
    <text evidence="5">Belongs to the helicase family. RecG subfamily.</text>
</comment>
<gene>
    <name type="primary">recG</name>
    <name type="ordered locus">BQ2027_MB2998C</name>
</gene>
<sequence>MASLSDRLDRVLGATAADALDEQFGMRTVDDLLRHYPRSYVEGAARVGIGDARPEAGEHITIVDVITDTYSFPMKKKPNRKCLRITVGGGRNKVTATFFNADYIMRDLTKHTKVMLSGEVGYYKGAMQLTHPAFLILDSPDGKNHGTRSLKSIADASKAISGELVVEEFERRFFPIYPASTKVQSWDIFKCVRQVLDVLDRVDDPLPAELRAKHGLIPEDEALRAIHLAESQSLRERARERLTFDEAVGLQWALVARRHGELSESGPSAAWKSNGLAAELLRRLPFELTAGQREVLDVLSDGLAANRPLNRLLQGEVGSGKTIVAVLAMLQMVDAGYQCALLAPTEVLAAQHLRSIRDVLGPLAMGGQLGGAENATRVALLTGSMTAGQKKQVRAEIASGQVGIVIGTHALLQEAVDFHNLGMVVVDEQHRFGVEQRDQLRAKAPAGITPHLLVMTATPIPRTVALTVYGDLETSTLRELPLGRQPIATNVIFVKDKPAWLDRAWRRIIEEAAAGRQAYVVAPRIDESDDTDVQGGVRPSATAEGLFSRLRSAELAELRLALMHGRLSADDKDAAMAAFRAGEVDVLVCTTVIEVGVDVPNATVMLVMDADRFGISQLHQLRGRIGRGEHPSVCLLASWVPPDTPAGQRLRAVAGTMDGFALADLDLKERKEGDVLGRNQSGKAITLRLLSLAEHEEYIVAARDFCIEAYKNPTDPALALMAARFTSTDRIEYLDKS</sequence>
<keyword id="KW-0067">ATP-binding</keyword>
<keyword id="KW-0227">DNA damage</keyword>
<keyword id="KW-0233">DNA recombination</keyword>
<keyword id="KW-0234">DNA repair</keyword>
<keyword id="KW-0238">DNA-binding</keyword>
<keyword id="KW-0347">Helicase</keyword>
<keyword id="KW-0378">Hydrolase</keyword>
<keyword id="KW-0413">Isomerase</keyword>
<keyword id="KW-0547">Nucleotide-binding</keyword>
<keyword id="KW-1185">Reference proteome</keyword>
<reference key="1">
    <citation type="journal article" date="2003" name="Proc. Natl. Acad. Sci. U.S.A.">
        <title>The complete genome sequence of Mycobacterium bovis.</title>
        <authorList>
            <person name="Garnier T."/>
            <person name="Eiglmeier K."/>
            <person name="Camus J.-C."/>
            <person name="Medina N."/>
            <person name="Mansoor H."/>
            <person name="Pryor M."/>
            <person name="Duthoy S."/>
            <person name="Grondin S."/>
            <person name="Lacroix C."/>
            <person name="Monsempe C."/>
            <person name="Simon S."/>
            <person name="Harris B."/>
            <person name="Atkin R."/>
            <person name="Doggett J."/>
            <person name="Mayes R."/>
            <person name="Keating L."/>
            <person name="Wheeler P.R."/>
            <person name="Parkhill J."/>
            <person name="Barrell B.G."/>
            <person name="Cole S.T."/>
            <person name="Gordon S.V."/>
            <person name="Hewinson R.G."/>
        </authorList>
    </citation>
    <scope>NUCLEOTIDE SEQUENCE [LARGE SCALE GENOMIC DNA]</scope>
    <source>
        <strain>ATCC BAA-935 / AF2122/97</strain>
    </source>
</reference>
<reference key="2">
    <citation type="journal article" date="2017" name="Genome Announc.">
        <title>Updated reference genome sequence and annotation of Mycobacterium bovis AF2122/97.</title>
        <authorList>
            <person name="Malone K.M."/>
            <person name="Farrell D."/>
            <person name="Stuber T.P."/>
            <person name="Schubert O.T."/>
            <person name="Aebersold R."/>
            <person name="Robbe-Austerman S."/>
            <person name="Gordon S.V."/>
        </authorList>
    </citation>
    <scope>NUCLEOTIDE SEQUENCE [LARGE SCALE GENOMIC DNA]</scope>
    <scope>GENOME REANNOTATION</scope>
    <source>
        <strain>ATCC BAA-935 / AF2122/97</strain>
    </source>
</reference>
<evidence type="ECO:0000250" key="1">
    <source>
        <dbReference type="UniProtKB" id="P24230"/>
    </source>
</evidence>
<evidence type="ECO:0000250" key="2">
    <source>
        <dbReference type="UniProtKB" id="Q9WY48"/>
    </source>
</evidence>
<evidence type="ECO:0000255" key="3">
    <source>
        <dbReference type="PROSITE-ProRule" id="PRU00541"/>
    </source>
</evidence>
<evidence type="ECO:0000255" key="4">
    <source>
        <dbReference type="PROSITE-ProRule" id="PRU00542"/>
    </source>
</evidence>
<evidence type="ECO:0000305" key="5"/>
<accession>P64323</accession>
<accession>A0A1R3Y2R4</accession>
<accession>P95122</accession>
<accession>X2BMQ8</accession>
<feature type="chain" id="PRO_0000102147" description="ATP-dependent DNA helicase RecG">
    <location>
        <begin position="1"/>
        <end position="737"/>
    </location>
</feature>
<feature type="domain" description="Helicase ATP-binding" evidence="3">
    <location>
        <begin position="302"/>
        <end position="477"/>
    </location>
</feature>
<feature type="domain" description="Helicase C-terminal" evidence="4">
    <location>
        <begin position="514"/>
        <end position="673"/>
    </location>
</feature>
<feature type="region of interest" description="Wedge domain" evidence="2">
    <location>
        <begin position="44"/>
        <end position="171"/>
    </location>
</feature>
<feature type="short sequence motif" description="DEAH box" evidence="3">
    <location>
        <begin position="427"/>
        <end position="430"/>
    </location>
</feature>
<feature type="binding site" evidence="3">
    <location>
        <begin position="315"/>
        <end position="322"/>
    </location>
    <ligand>
        <name>ATP</name>
        <dbReference type="ChEBI" id="CHEBI:30616"/>
    </ligand>
</feature>
<dbReference type="EC" id="5.6.2.4" evidence="1"/>
<dbReference type="EMBL" id="LT708304">
    <property type="protein sequence ID" value="SIU01621.1"/>
    <property type="molecule type" value="Genomic_DNA"/>
</dbReference>
<dbReference type="RefSeq" id="NP_856643.1">
    <property type="nucleotide sequence ID" value="NC_002945.3"/>
</dbReference>
<dbReference type="RefSeq" id="WP_003415026.1">
    <property type="nucleotide sequence ID" value="NC_002945.4"/>
</dbReference>
<dbReference type="SMR" id="P64323"/>
<dbReference type="KEGG" id="mbo:BQ2027_MB2998C"/>
<dbReference type="PATRIC" id="fig|233413.5.peg.3295"/>
<dbReference type="Proteomes" id="UP000001419">
    <property type="component" value="Chromosome"/>
</dbReference>
<dbReference type="GO" id="GO:0005524">
    <property type="term" value="F:ATP binding"/>
    <property type="evidence" value="ECO:0007669"/>
    <property type="project" value="UniProtKB-KW"/>
</dbReference>
<dbReference type="GO" id="GO:0016887">
    <property type="term" value="F:ATP hydrolysis activity"/>
    <property type="evidence" value="ECO:0007669"/>
    <property type="project" value="RHEA"/>
</dbReference>
<dbReference type="GO" id="GO:0003677">
    <property type="term" value="F:DNA binding"/>
    <property type="evidence" value="ECO:0007669"/>
    <property type="project" value="UniProtKB-KW"/>
</dbReference>
<dbReference type="GO" id="GO:0003678">
    <property type="term" value="F:DNA helicase activity"/>
    <property type="evidence" value="ECO:0007669"/>
    <property type="project" value="InterPro"/>
</dbReference>
<dbReference type="GO" id="GO:0006310">
    <property type="term" value="P:DNA recombination"/>
    <property type="evidence" value="ECO:0007669"/>
    <property type="project" value="UniProtKB-KW"/>
</dbReference>
<dbReference type="GO" id="GO:0006281">
    <property type="term" value="P:DNA repair"/>
    <property type="evidence" value="ECO:0007669"/>
    <property type="project" value="UniProtKB-KW"/>
</dbReference>
<dbReference type="CDD" id="cd17992">
    <property type="entry name" value="DEXHc_RecG"/>
    <property type="match status" value="1"/>
</dbReference>
<dbReference type="CDD" id="cd04488">
    <property type="entry name" value="RecG_wedge_OBF"/>
    <property type="match status" value="1"/>
</dbReference>
<dbReference type="FunFam" id="3.40.50.300:FF:000391">
    <property type="entry name" value="ATP-dependent DNA helicase RecG"/>
    <property type="match status" value="1"/>
</dbReference>
<dbReference type="Gene3D" id="2.40.50.140">
    <property type="entry name" value="Nucleic acid-binding proteins"/>
    <property type="match status" value="1"/>
</dbReference>
<dbReference type="Gene3D" id="3.40.50.300">
    <property type="entry name" value="P-loop containing nucleotide triphosphate hydrolases"/>
    <property type="match status" value="2"/>
</dbReference>
<dbReference type="InterPro" id="IPR004609">
    <property type="entry name" value="ATP-dep_DNA_helicase_RecG"/>
</dbReference>
<dbReference type="InterPro" id="IPR011545">
    <property type="entry name" value="DEAD/DEAH_box_helicase_dom"/>
</dbReference>
<dbReference type="InterPro" id="IPR014001">
    <property type="entry name" value="Helicase_ATP-bd"/>
</dbReference>
<dbReference type="InterPro" id="IPR001650">
    <property type="entry name" value="Helicase_C-like"/>
</dbReference>
<dbReference type="InterPro" id="IPR012340">
    <property type="entry name" value="NA-bd_OB-fold"/>
</dbReference>
<dbReference type="InterPro" id="IPR027417">
    <property type="entry name" value="P-loop_NTPase"/>
</dbReference>
<dbReference type="InterPro" id="IPR047112">
    <property type="entry name" value="RecG/Mfd"/>
</dbReference>
<dbReference type="InterPro" id="IPR033454">
    <property type="entry name" value="RecG_wedge"/>
</dbReference>
<dbReference type="NCBIfam" id="NF008167">
    <property type="entry name" value="PRK10917.2-1"/>
    <property type="match status" value="1"/>
</dbReference>
<dbReference type="NCBIfam" id="TIGR00643">
    <property type="entry name" value="recG"/>
    <property type="match status" value="1"/>
</dbReference>
<dbReference type="PANTHER" id="PTHR47964">
    <property type="entry name" value="ATP-DEPENDENT DNA HELICASE HOMOLOG RECG, CHLOROPLASTIC"/>
    <property type="match status" value="1"/>
</dbReference>
<dbReference type="PANTHER" id="PTHR47964:SF1">
    <property type="entry name" value="ATP-DEPENDENT DNA HELICASE HOMOLOG RECG, CHLOROPLASTIC"/>
    <property type="match status" value="1"/>
</dbReference>
<dbReference type="Pfam" id="PF00270">
    <property type="entry name" value="DEAD"/>
    <property type="match status" value="1"/>
</dbReference>
<dbReference type="Pfam" id="PF00271">
    <property type="entry name" value="Helicase_C"/>
    <property type="match status" value="1"/>
</dbReference>
<dbReference type="Pfam" id="PF17191">
    <property type="entry name" value="RecG_wedge"/>
    <property type="match status" value="1"/>
</dbReference>
<dbReference type="SMART" id="SM00487">
    <property type="entry name" value="DEXDc"/>
    <property type="match status" value="1"/>
</dbReference>
<dbReference type="SMART" id="SM00490">
    <property type="entry name" value="HELICc"/>
    <property type="match status" value="1"/>
</dbReference>
<dbReference type="SUPFAM" id="SSF50249">
    <property type="entry name" value="Nucleic acid-binding proteins"/>
    <property type="match status" value="1"/>
</dbReference>
<dbReference type="SUPFAM" id="SSF52540">
    <property type="entry name" value="P-loop containing nucleoside triphosphate hydrolases"/>
    <property type="match status" value="2"/>
</dbReference>
<dbReference type="PROSITE" id="PS51192">
    <property type="entry name" value="HELICASE_ATP_BIND_1"/>
    <property type="match status" value="1"/>
</dbReference>
<dbReference type="PROSITE" id="PS51194">
    <property type="entry name" value="HELICASE_CTER"/>
    <property type="match status" value="1"/>
</dbReference>
<name>RECG_MYCBO</name>
<organism>
    <name type="scientific">Mycobacterium bovis (strain ATCC BAA-935 / AF2122/97)</name>
    <dbReference type="NCBI Taxonomy" id="233413"/>
    <lineage>
        <taxon>Bacteria</taxon>
        <taxon>Bacillati</taxon>
        <taxon>Actinomycetota</taxon>
        <taxon>Actinomycetes</taxon>
        <taxon>Mycobacteriales</taxon>
        <taxon>Mycobacteriaceae</taxon>
        <taxon>Mycobacterium</taxon>
        <taxon>Mycobacterium tuberculosis complex</taxon>
    </lineage>
</organism>